<dbReference type="EC" id="4.1.3.40" evidence="1"/>
<dbReference type="EMBL" id="CU928161">
    <property type="protein sequence ID" value="CAR05673.1"/>
    <property type="molecule type" value="Genomic_DNA"/>
</dbReference>
<dbReference type="RefSeq" id="WP_000019227.1">
    <property type="nucleotide sequence ID" value="NC_011742.1"/>
</dbReference>
<dbReference type="SMR" id="B7MJ29"/>
<dbReference type="KEGG" id="ecz:ECS88_4512"/>
<dbReference type="HOGENOM" id="CLU_096824_1_0_6"/>
<dbReference type="UniPathway" id="UPA00232"/>
<dbReference type="Proteomes" id="UP000000747">
    <property type="component" value="Chromosome"/>
</dbReference>
<dbReference type="GO" id="GO:0005829">
    <property type="term" value="C:cytosol"/>
    <property type="evidence" value="ECO:0007669"/>
    <property type="project" value="TreeGrafter"/>
</dbReference>
<dbReference type="GO" id="GO:0008813">
    <property type="term" value="F:chorismate lyase activity"/>
    <property type="evidence" value="ECO:0007669"/>
    <property type="project" value="UniProtKB-UniRule"/>
</dbReference>
<dbReference type="GO" id="GO:0042866">
    <property type="term" value="P:pyruvate biosynthetic process"/>
    <property type="evidence" value="ECO:0007669"/>
    <property type="project" value="UniProtKB-UniRule"/>
</dbReference>
<dbReference type="GO" id="GO:0006744">
    <property type="term" value="P:ubiquinone biosynthetic process"/>
    <property type="evidence" value="ECO:0007669"/>
    <property type="project" value="UniProtKB-UniRule"/>
</dbReference>
<dbReference type="FunFam" id="3.40.1410.10:FF:000002">
    <property type="entry name" value="Chorismate pyruvate-lyase"/>
    <property type="match status" value="1"/>
</dbReference>
<dbReference type="Gene3D" id="3.40.1410.10">
    <property type="entry name" value="Chorismate lyase-like"/>
    <property type="match status" value="1"/>
</dbReference>
<dbReference type="HAMAP" id="MF_01632">
    <property type="entry name" value="UbiC"/>
    <property type="match status" value="1"/>
</dbReference>
<dbReference type="InterPro" id="IPR007440">
    <property type="entry name" value="Chorismate--pyruvate_lyase"/>
</dbReference>
<dbReference type="InterPro" id="IPR028978">
    <property type="entry name" value="Chorismate_lyase_/UTRA_dom_sf"/>
</dbReference>
<dbReference type="NCBIfam" id="NF008656">
    <property type="entry name" value="PRK11655.1"/>
    <property type="match status" value="1"/>
</dbReference>
<dbReference type="PANTHER" id="PTHR38683">
    <property type="entry name" value="CHORISMATE PYRUVATE-LYASE"/>
    <property type="match status" value="1"/>
</dbReference>
<dbReference type="PANTHER" id="PTHR38683:SF1">
    <property type="entry name" value="CHORISMATE PYRUVATE-LYASE"/>
    <property type="match status" value="1"/>
</dbReference>
<dbReference type="Pfam" id="PF04345">
    <property type="entry name" value="Chor_lyase"/>
    <property type="match status" value="1"/>
</dbReference>
<dbReference type="SUPFAM" id="SSF64288">
    <property type="entry name" value="Chorismate lyase-like"/>
    <property type="match status" value="1"/>
</dbReference>
<comment type="function">
    <text evidence="1">Removes the pyruvyl group from chorismate, with concomitant aromatization of the ring, to provide 4-hydroxybenzoate (4HB) for the ubiquinone pathway.</text>
</comment>
<comment type="catalytic activity">
    <reaction evidence="1">
        <text>chorismate = 4-hydroxybenzoate + pyruvate</text>
        <dbReference type="Rhea" id="RHEA:16505"/>
        <dbReference type="ChEBI" id="CHEBI:15361"/>
        <dbReference type="ChEBI" id="CHEBI:17879"/>
        <dbReference type="ChEBI" id="CHEBI:29748"/>
        <dbReference type="EC" id="4.1.3.40"/>
    </reaction>
</comment>
<comment type="pathway">
    <text evidence="1">Cofactor biosynthesis; ubiquinone biosynthesis.</text>
</comment>
<comment type="subunit">
    <text evidence="1">Monomer.</text>
</comment>
<comment type="subcellular location">
    <subcellularLocation>
        <location evidence="1">Cytoplasm</location>
    </subcellularLocation>
</comment>
<comment type="similarity">
    <text evidence="1">Belongs to the UbiC family.</text>
</comment>
<reference key="1">
    <citation type="journal article" date="2009" name="PLoS Genet.">
        <title>Organised genome dynamics in the Escherichia coli species results in highly diverse adaptive paths.</title>
        <authorList>
            <person name="Touchon M."/>
            <person name="Hoede C."/>
            <person name="Tenaillon O."/>
            <person name="Barbe V."/>
            <person name="Baeriswyl S."/>
            <person name="Bidet P."/>
            <person name="Bingen E."/>
            <person name="Bonacorsi S."/>
            <person name="Bouchier C."/>
            <person name="Bouvet O."/>
            <person name="Calteau A."/>
            <person name="Chiapello H."/>
            <person name="Clermont O."/>
            <person name="Cruveiller S."/>
            <person name="Danchin A."/>
            <person name="Diard M."/>
            <person name="Dossat C."/>
            <person name="Karoui M.E."/>
            <person name="Frapy E."/>
            <person name="Garry L."/>
            <person name="Ghigo J.M."/>
            <person name="Gilles A.M."/>
            <person name="Johnson J."/>
            <person name="Le Bouguenec C."/>
            <person name="Lescat M."/>
            <person name="Mangenot S."/>
            <person name="Martinez-Jehanne V."/>
            <person name="Matic I."/>
            <person name="Nassif X."/>
            <person name="Oztas S."/>
            <person name="Petit M.A."/>
            <person name="Pichon C."/>
            <person name="Rouy Z."/>
            <person name="Ruf C.S."/>
            <person name="Schneider D."/>
            <person name="Tourret J."/>
            <person name="Vacherie B."/>
            <person name="Vallenet D."/>
            <person name="Medigue C."/>
            <person name="Rocha E.P.C."/>
            <person name="Denamur E."/>
        </authorList>
    </citation>
    <scope>NUCLEOTIDE SEQUENCE [LARGE SCALE GENOMIC DNA]</scope>
    <source>
        <strain>S88 / ExPEC</strain>
    </source>
</reference>
<name>UBIC_ECO45</name>
<accession>B7MJ29</accession>
<protein>
    <recommendedName>
        <fullName evidence="1">Chorismate pyruvate-lyase</fullName>
        <shortName evidence="1">CL</shortName>
        <shortName evidence="1">CPL</shortName>
        <ecNumber evidence="1">4.1.3.40</ecNumber>
    </recommendedName>
</protein>
<feature type="chain" id="PRO_1000186518" description="Chorismate pyruvate-lyase">
    <location>
        <begin position="1"/>
        <end position="165"/>
    </location>
</feature>
<feature type="binding site" evidence="1">
    <location>
        <position position="35"/>
    </location>
    <ligand>
        <name>substrate</name>
    </ligand>
</feature>
<feature type="binding site" evidence="1">
    <location>
        <position position="77"/>
    </location>
    <ligand>
        <name>substrate</name>
    </ligand>
</feature>
<feature type="binding site" evidence="1">
    <location>
        <position position="115"/>
    </location>
    <ligand>
        <name>substrate</name>
    </ligand>
</feature>
<feature type="binding site" evidence="1">
    <location>
        <position position="156"/>
    </location>
    <ligand>
        <name>substrate</name>
    </ligand>
</feature>
<evidence type="ECO:0000255" key="1">
    <source>
        <dbReference type="HAMAP-Rule" id="MF_01632"/>
    </source>
</evidence>
<organism>
    <name type="scientific">Escherichia coli O45:K1 (strain S88 / ExPEC)</name>
    <dbReference type="NCBI Taxonomy" id="585035"/>
    <lineage>
        <taxon>Bacteria</taxon>
        <taxon>Pseudomonadati</taxon>
        <taxon>Pseudomonadota</taxon>
        <taxon>Gammaproteobacteria</taxon>
        <taxon>Enterobacterales</taxon>
        <taxon>Enterobacteriaceae</taxon>
        <taxon>Escherichia</taxon>
    </lineage>
</organism>
<proteinExistence type="inferred from homology"/>
<gene>
    <name evidence="1" type="primary">ubiC</name>
    <name type="ordered locus">ECS88_4512</name>
</gene>
<sequence>MSHPALTQLRALRYFTEIPALEPQLLDWLLLEDSMTKRFEQQGKTVSVTMIREGFVEQNEIPEELPLLPKESRYWLREILLCADGEPWLAGRTVVPVSTLSGPELALQKLGKTPLGRYLFTSSTLTRDFIEIGRDAGLWGRRSRLRLSGKPLLLTELFLPASPLY</sequence>
<keyword id="KW-0963">Cytoplasm</keyword>
<keyword id="KW-0456">Lyase</keyword>
<keyword id="KW-0670">Pyruvate</keyword>
<keyword id="KW-1185">Reference proteome</keyword>
<keyword id="KW-0831">Ubiquinone biosynthesis</keyword>